<keyword id="KW-0406">Ion transport</keyword>
<keyword id="KW-0520">NAD</keyword>
<keyword id="KW-0915">Sodium</keyword>
<keyword id="KW-0739">Sodium transport</keyword>
<keyword id="KW-1278">Translocase</keyword>
<keyword id="KW-0813">Transport</keyword>
<keyword id="KW-0830">Ubiquinone</keyword>
<sequence length="470" mass="52420">MKIAITRGLDLSLQGSPKESGFLKRIDPALVSVDLRPYSALALKLKVEQDDVISSGSPIAEYKNFPGVFITSPVSGIVKEIRRGEKRSLLDVVIKKTPGQNLTEYSYDLSKLSRAELLEIFKKEGLFALFKQRPFDIPALPTQTPRDVFINLADNRPFTPSTEKQLAVFSSREEGFYVFNVGVRAVAKLFGLCPHIVSTDRLALPEKDLKSIAHLHKITGPYPSGSPSTHIHYIAPITNEKDIVFTLSFQEVLTIGHLFLKGRILNEQVVALAGSGLKSSLRRYVITTKGANFESLLPLQDISSDVSLISGDPLTGRLCDRESLPCLGMRDSTISVLPNPKTRQAFNFLRLGINKPTHTRTYLSGFLKRKHTYMDPDTNLHGETRPIIDTEIYDKVMPLKIPVVPLIKAVITKDFELACMLGFLEVCPEDFALPTFIDPSKTEMLTIIKDALKDYAKETGILNLEYEDKE</sequence>
<name>NQRA_CHLCV</name>
<dbReference type="EC" id="7.2.1.1" evidence="1"/>
<dbReference type="EMBL" id="AE015925">
    <property type="protein sequence ID" value="AAP04755.1"/>
    <property type="molecule type" value="Genomic_DNA"/>
</dbReference>
<dbReference type="RefSeq" id="WP_011005976.1">
    <property type="nucleotide sequence ID" value="NC_003361.3"/>
</dbReference>
<dbReference type="SMR" id="Q824Y6"/>
<dbReference type="STRING" id="227941.CCA_00002"/>
<dbReference type="KEGG" id="cca:CCA_00002"/>
<dbReference type="eggNOG" id="COG1726">
    <property type="taxonomic scope" value="Bacteria"/>
</dbReference>
<dbReference type="HOGENOM" id="CLU_046656_0_0_0"/>
<dbReference type="OrthoDB" id="9774536at2"/>
<dbReference type="Proteomes" id="UP000002193">
    <property type="component" value="Chromosome"/>
</dbReference>
<dbReference type="GO" id="GO:0016655">
    <property type="term" value="F:oxidoreductase activity, acting on NAD(P)H, quinone or similar compound as acceptor"/>
    <property type="evidence" value="ECO:0007669"/>
    <property type="project" value="UniProtKB-UniRule"/>
</dbReference>
<dbReference type="GO" id="GO:0006814">
    <property type="term" value="P:sodium ion transport"/>
    <property type="evidence" value="ECO:0007669"/>
    <property type="project" value="UniProtKB-UniRule"/>
</dbReference>
<dbReference type="HAMAP" id="MF_00425">
    <property type="entry name" value="NqrA"/>
    <property type="match status" value="1"/>
</dbReference>
<dbReference type="InterPro" id="IPR008703">
    <property type="entry name" value="NqrA"/>
</dbReference>
<dbReference type="InterPro" id="IPR056148">
    <property type="entry name" value="NQRA_2nd"/>
</dbReference>
<dbReference type="InterPro" id="IPR022615">
    <property type="entry name" value="NqrA_C_domain"/>
</dbReference>
<dbReference type="InterPro" id="IPR056147">
    <property type="entry name" value="NQRA_N"/>
</dbReference>
<dbReference type="NCBIfam" id="TIGR01936">
    <property type="entry name" value="nqrA"/>
    <property type="match status" value="1"/>
</dbReference>
<dbReference type="NCBIfam" id="NF003758">
    <property type="entry name" value="PRK05352.1-1"/>
    <property type="match status" value="1"/>
</dbReference>
<dbReference type="PANTHER" id="PTHR37839">
    <property type="entry name" value="NA(+)-TRANSLOCATING NADH-QUINONE REDUCTASE SUBUNIT A"/>
    <property type="match status" value="1"/>
</dbReference>
<dbReference type="PANTHER" id="PTHR37839:SF1">
    <property type="entry name" value="NA(+)-TRANSLOCATING NADH-QUINONE REDUCTASE SUBUNIT A"/>
    <property type="match status" value="1"/>
</dbReference>
<dbReference type="Pfam" id="PF24836">
    <property type="entry name" value="NQRA_2nd"/>
    <property type="match status" value="1"/>
</dbReference>
<dbReference type="Pfam" id="PF05896">
    <property type="entry name" value="NQRA_N"/>
    <property type="match status" value="1"/>
</dbReference>
<dbReference type="Pfam" id="PF11973">
    <property type="entry name" value="NQRA_SLBB"/>
    <property type="match status" value="1"/>
</dbReference>
<organism>
    <name type="scientific">Chlamydia caviae (strain ATCC VR-813 / DSM 19441 / 03DC25 / GPIC)</name>
    <name type="common">Chlamydophila caviae</name>
    <dbReference type="NCBI Taxonomy" id="227941"/>
    <lineage>
        <taxon>Bacteria</taxon>
        <taxon>Pseudomonadati</taxon>
        <taxon>Chlamydiota</taxon>
        <taxon>Chlamydiia</taxon>
        <taxon>Chlamydiales</taxon>
        <taxon>Chlamydiaceae</taxon>
        <taxon>Chlamydia/Chlamydophila group</taxon>
        <taxon>Chlamydia</taxon>
    </lineage>
</organism>
<proteinExistence type="inferred from homology"/>
<accession>Q824Y6</accession>
<evidence type="ECO:0000255" key="1">
    <source>
        <dbReference type="HAMAP-Rule" id="MF_00425"/>
    </source>
</evidence>
<comment type="function">
    <text evidence="1">NQR complex catalyzes the reduction of ubiquinone-1 to ubiquinol by two successive reactions, coupled with the transport of Na(+) ions from the cytoplasm to the periplasm. NqrA to NqrE are probably involved in the second step, the conversion of ubisemiquinone to ubiquinol.</text>
</comment>
<comment type="catalytic activity">
    <reaction evidence="1">
        <text>a ubiquinone + n Na(+)(in) + NADH + H(+) = a ubiquinol + n Na(+)(out) + NAD(+)</text>
        <dbReference type="Rhea" id="RHEA:47748"/>
        <dbReference type="Rhea" id="RHEA-COMP:9565"/>
        <dbReference type="Rhea" id="RHEA-COMP:9566"/>
        <dbReference type="ChEBI" id="CHEBI:15378"/>
        <dbReference type="ChEBI" id="CHEBI:16389"/>
        <dbReference type="ChEBI" id="CHEBI:17976"/>
        <dbReference type="ChEBI" id="CHEBI:29101"/>
        <dbReference type="ChEBI" id="CHEBI:57540"/>
        <dbReference type="ChEBI" id="CHEBI:57945"/>
        <dbReference type="EC" id="7.2.1.1"/>
    </reaction>
</comment>
<comment type="subunit">
    <text evidence="1">Composed of six subunits; NqrA, NqrB, NqrC, NqrD, NqrE and NqrF.</text>
</comment>
<comment type="similarity">
    <text evidence="1">Belongs to the NqrA family.</text>
</comment>
<feature type="chain" id="PRO_0000214193" description="Na(+)-translocating NADH-quinone reductase subunit A">
    <location>
        <begin position="1"/>
        <end position="470"/>
    </location>
</feature>
<protein>
    <recommendedName>
        <fullName evidence="1">Na(+)-translocating NADH-quinone reductase subunit A</fullName>
        <shortName evidence="1">Na(+)-NQR subunit A</shortName>
        <shortName evidence="1">Na(+)-translocating NQR subunit A</shortName>
        <ecNumber evidence="1">7.2.1.1</ecNumber>
    </recommendedName>
    <alternativeName>
        <fullName evidence="1">NQR complex subunit A</fullName>
    </alternativeName>
    <alternativeName>
        <fullName evidence="1">NQR-1 subunit A</fullName>
    </alternativeName>
</protein>
<reference key="1">
    <citation type="journal article" date="2003" name="Nucleic Acids Res.">
        <title>Genome sequence of Chlamydophila caviae (Chlamydia psittaci GPIC): examining the role of niche-specific genes in the evolution of the Chlamydiaceae.</title>
        <authorList>
            <person name="Read T.D."/>
            <person name="Myers G.S.A."/>
            <person name="Brunham R.C."/>
            <person name="Nelson W.C."/>
            <person name="Paulsen I.T."/>
            <person name="Heidelberg J.F."/>
            <person name="Holtzapple E.K."/>
            <person name="Khouri H.M."/>
            <person name="Federova N.B."/>
            <person name="Carty H.A."/>
            <person name="Umayam L.A."/>
            <person name="Haft D.H."/>
            <person name="Peterson J.D."/>
            <person name="Beanan M.J."/>
            <person name="White O."/>
            <person name="Salzberg S.L."/>
            <person name="Hsia R.-C."/>
            <person name="McClarty G."/>
            <person name="Rank R.G."/>
            <person name="Bavoil P.M."/>
            <person name="Fraser C.M."/>
        </authorList>
    </citation>
    <scope>NUCLEOTIDE SEQUENCE [LARGE SCALE GENOMIC DNA]</scope>
    <source>
        <strain>ATCC VR-813 / DSM 19441 / 03DC25 / GPIC</strain>
    </source>
</reference>
<gene>
    <name evidence="1" type="primary">nqrA</name>
    <name type="ordered locus">CCA_00002</name>
</gene>